<proteinExistence type="inferred from homology"/>
<organism>
    <name type="scientific">Yersinia pestis (strain Pestoides F)</name>
    <dbReference type="NCBI Taxonomy" id="386656"/>
    <lineage>
        <taxon>Bacteria</taxon>
        <taxon>Pseudomonadati</taxon>
        <taxon>Pseudomonadota</taxon>
        <taxon>Gammaproteobacteria</taxon>
        <taxon>Enterobacterales</taxon>
        <taxon>Yersiniaceae</taxon>
        <taxon>Yersinia</taxon>
    </lineage>
</organism>
<sequence length="277" mass="30806">MTAQSQNIVETPSRVRAHALGVNAPELAKYQDEPAQMRSGAVGKSGYLKLRFAKREHCSILAEMERRVPSLVQKALYWDEEIPELPCVTMISTSGCILQGDRLATDVHVEAGACAHVTTQSATKVHMMNANYASQIQNFIVEEGGYLEFMSDPLIPHRNSRFITDTTISIHPTATAIYSEVLMSGRKYHHADERFGFDVYSSRVAAQNLAGKELFVEKYVLEPKVESLDAVGVMQTFDAFGNVILLTPKEHHDRILARVPAHFDIKGGDCQRRDAST</sequence>
<feature type="chain" id="PRO_1000145105" description="Urease accessory protein UreD">
    <location>
        <begin position="1"/>
        <end position="277"/>
    </location>
</feature>
<name>URED_YERPP</name>
<comment type="function">
    <text evidence="1">Required for maturation of urease via the functional incorporation of the urease nickel metallocenter.</text>
</comment>
<comment type="subunit">
    <text evidence="1">UreD, UreF and UreG form a complex that acts as a GTP-hydrolysis-dependent molecular chaperone, activating the urease apoprotein by helping to assemble the nickel containing metallocenter of UreC. The UreE protein probably delivers the nickel.</text>
</comment>
<comment type="subcellular location">
    <subcellularLocation>
        <location evidence="1">Cytoplasm</location>
    </subcellularLocation>
</comment>
<comment type="similarity">
    <text evidence="1">Belongs to the UreD family.</text>
</comment>
<accession>A4TL28</accession>
<gene>
    <name evidence="1" type="primary">ureD</name>
    <name type="ordered locus">YPDSF_1605</name>
</gene>
<evidence type="ECO:0000255" key="1">
    <source>
        <dbReference type="HAMAP-Rule" id="MF_01384"/>
    </source>
</evidence>
<protein>
    <recommendedName>
        <fullName evidence="1">Urease accessory protein UreD</fullName>
    </recommendedName>
</protein>
<dbReference type="EMBL" id="CP000668">
    <property type="protein sequence ID" value="ABP39990.1"/>
    <property type="molecule type" value="Genomic_DNA"/>
</dbReference>
<dbReference type="SMR" id="A4TL28"/>
<dbReference type="KEGG" id="ypp:YPDSF_1605"/>
<dbReference type="PATRIC" id="fig|386656.14.peg.2162"/>
<dbReference type="GO" id="GO:0005737">
    <property type="term" value="C:cytoplasm"/>
    <property type="evidence" value="ECO:0007669"/>
    <property type="project" value="UniProtKB-SubCell"/>
</dbReference>
<dbReference type="GO" id="GO:0016151">
    <property type="term" value="F:nickel cation binding"/>
    <property type="evidence" value="ECO:0007669"/>
    <property type="project" value="UniProtKB-UniRule"/>
</dbReference>
<dbReference type="HAMAP" id="MF_01384">
    <property type="entry name" value="UreD"/>
    <property type="match status" value="1"/>
</dbReference>
<dbReference type="InterPro" id="IPR002669">
    <property type="entry name" value="UreD"/>
</dbReference>
<dbReference type="PANTHER" id="PTHR33643">
    <property type="entry name" value="UREASE ACCESSORY PROTEIN D"/>
    <property type="match status" value="1"/>
</dbReference>
<dbReference type="PANTHER" id="PTHR33643:SF1">
    <property type="entry name" value="UREASE ACCESSORY PROTEIN D"/>
    <property type="match status" value="1"/>
</dbReference>
<dbReference type="Pfam" id="PF01774">
    <property type="entry name" value="UreD"/>
    <property type="match status" value="1"/>
</dbReference>
<keyword id="KW-0143">Chaperone</keyword>
<keyword id="KW-0963">Cytoplasm</keyword>
<keyword id="KW-0996">Nickel insertion</keyword>
<reference key="1">
    <citation type="submission" date="2007-02" db="EMBL/GenBank/DDBJ databases">
        <title>Complete sequence of chromosome of Yersinia pestis Pestoides F.</title>
        <authorList>
            <consortium name="US DOE Joint Genome Institute"/>
            <person name="Copeland A."/>
            <person name="Lucas S."/>
            <person name="Lapidus A."/>
            <person name="Barry K."/>
            <person name="Detter J.C."/>
            <person name="Glavina del Rio T."/>
            <person name="Hammon N."/>
            <person name="Israni S."/>
            <person name="Dalin E."/>
            <person name="Tice H."/>
            <person name="Pitluck S."/>
            <person name="Di Bartolo G."/>
            <person name="Chain P."/>
            <person name="Malfatti S."/>
            <person name="Shin M."/>
            <person name="Vergez L."/>
            <person name="Schmutz J."/>
            <person name="Larimer F."/>
            <person name="Land M."/>
            <person name="Hauser L."/>
            <person name="Worsham P."/>
            <person name="Chu M."/>
            <person name="Bearden S."/>
            <person name="Garcia E."/>
            <person name="Richardson P."/>
        </authorList>
    </citation>
    <scope>NUCLEOTIDE SEQUENCE [LARGE SCALE GENOMIC DNA]</scope>
    <source>
        <strain>Pestoides F</strain>
    </source>
</reference>